<sequence>MSIKTEEISSLIKKQLEGYQDDLAAEEVGTVTYIGDGIARATGLENAMANELLQFSNGSYGMALNLETNDVGIIILGDFDEIREGDQVKRTGRIMEVPVGDAMIGRVVNSLGQPVDGLGAIKTDKTRPIEFKAPGVMQRKSVSEPLQTGLKAIDALVPIGRGQRELIIGDRKTGKTSIAIDTILNQKDQNMICVYVAIGQKDSTVRAQVETLKKYGAMDYTIVLTAGPSEPAPMLYIAPYAGAAMGEEFMYNGKHVLIVYDDLSKQATSYRELSLLLRRPPGREAYPGDIFYTHSRLLERAAKLSDKLGGGSMTALPVIETQAGDISAYIPTNVISITDGQIFLQSDLFYAGTRPAIDAGASVSRVGGDAQVKAMKKVAGTLRLDLASFRELEAFTQFGSDLDAATQAKLNRGRRTVEVLKQPVHKPLPVEKQVIILYALTHGFLDPIPIEDITRFQDELFDFFDSNAADLLKQIRDTGNLPDTDKLDAQIKAFAGGFQTSKQLAAAKD</sequence>
<proteinExistence type="inferred from homology"/>
<reference key="1">
    <citation type="submission" date="2008-06" db="EMBL/GenBank/DDBJ databases">
        <title>Lactobacillus casei BL23 complete genome sequence.</title>
        <authorList>
            <person name="Maze A."/>
            <person name="Boel G."/>
            <person name="Bourand A."/>
            <person name="Loux V."/>
            <person name="Gibrat J.F."/>
            <person name="Zuniga M."/>
            <person name="Hartke A."/>
            <person name="Deutscher J."/>
        </authorList>
    </citation>
    <scope>NUCLEOTIDE SEQUENCE [LARGE SCALE GENOMIC DNA]</scope>
    <source>
        <strain>BL23</strain>
    </source>
</reference>
<accession>B3WDL6</accession>
<dbReference type="EC" id="7.1.2.2" evidence="1"/>
<dbReference type="EMBL" id="FM177140">
    <property type="protein sequence ID" value="CAQ66467.1"/>
    <property type="molecule type" value="Genomic_DNA"/>
</dbReference>
<dbReference type="SMR" id="B3WDL6"/>
<dbReference type="KEGG" id="lcb:LCABL_13860"/>
<dbReference type="HOGENOM" id="CLU_010091_2_1_9"/>
<dbReference type="GO" id="GO:0005886">
    <property type="term" value="C:plasma membrane"/>
    <property type="evidence" value="ECO:0007669"/>
    <property type="project" value="UniProtKB-SubCell"/>
</dbReference>
<dbReference type="GO" id="GO:0045259">
    <property type="term" value="C:proton-transporting ATP synthase complex"/>
    <property type="evidence" value="ECO:0007669"/>
    <property type="project" value="UniProtKB-KW"/>
</dbReference>
<dbReference type="GO" id="GO:0043531">
    <property type="term" value="F:ADP binding"/>
    <property type="evidence" value="ECO:0007669"/>
    <property type="project" value="TreeGrafter"/>
</dbReference>
<dbReference type="GO" id="GO:0005524">
    <property type="term" value="F:ATP binding"/>
    <property type="evidence" value="ECO:0007669"/>
    <property type="project" value="UniProtKB-UniRule"/>
</dbReference>
<dbReference type="GO" id="GO:0046933">
    <property type="term" value="F:proton-transporting ATP synthase activity, rotational mechanism"/>
    <property type="evidence" value="ECO:0007669"/>
    <property type="project" value="UniProtKB-UniRule"/>
</dbReference>
<dbReference type="CDD" id="cd18113">
    <property type="entry name" value="ATP-synt_F1_alpha_C"/>
    <property type="match status" value="1"/>
</dbReference>
<dbReference type="CDD" id="cd18116">
    <property type="entry name" value="ATP-synt_F1_alpha_N"/>
    <property type="match status" value="1"/>
</dbReference>
<dbReference type="CDD" id="cd01132">
    <property type="entry name" value="F1-ATPase_alpha_CD"/>
    <property type="match status" value="1"/>
</dbReference>
<dbReference type="FunFam" id="1.20.150.20:FF:000001">
    <property type="entry name" value="ATP synthase subunit alpha"/>
    <property type="match status" value="1"/>
</dbReference>
<dbReference type="FunFam" id="2.40.30.20:FF:000001">
    <property type="entry name" value="ATP synthase subunit alpha"/>
    <property type="match status" value="1"/>
</dbReference>
<dbReference type="FunFam" id="3.40.50.300:FF:000002">
    <property type="entry name" value="ATP synthase subunit alpha"/>
    <property type="match status" value="1"/>
</dbReference>
<dbReference type="Gene3D" id="2.40.30.20">
    <property type="match status" value="1"/>
</dbReference>
<dbReference type="Gene3D" id="1.20.150.20">
    <property type="entry name" value="ATP synthase alpha/beta chain, C-terminal domain"/>
    <property type="match status" value="1"/>
</dbReference>
<dbReference type="Gene3D" id="3.40.50.300">
    <property type="entry name" value="P-loop containing nucleotide triphosphate hydrolases"/>
    <property type="match status" value="1"/>
</dbReference>
<dbReference type="HAMAP" id="MF_01346">
    <property type="entry name" value="ATP_synth_alpha_bact"/>
    <property type="match status" value="1"/>
</dbReference>
<dbReference type="InterPro" id="IPR023366">
    <property type="entry name" value="ATP_synth_asu-like_sf"/>
</dbReference>
<dbReference type="InterPro" id="IPR000793">
    <property type="entry name" value="ATP_synth_asu_C"/>
</dbReference>
<dbReference type="InterPro" id="IPR038376">
    <property type="entry name" value="ATP_synth_asu_C_sf"/>
</dbReference>
<dbReference type="InterPro" id="IPR033732">
    <property type="entry name" value="ATP_synth_F1_a_nt-bd_dom"/>
</dbReference>
<dbReference type="InterPro" id="IPR005294">
    <property type="entry name" value="ATP_synth_F1_asu"/>
</dbReference>
<dbReference type="InterPro" id="IPR020003">
    <property type="entry name" value="ATPase_a/bsu_AS"/>
</dbReference>
<dbReference type="InterPro" id="IPR004100">
    <property type="entry name" value="ATPase_F1/V1/A1_a/bsu_N"/>
</dbReference>
<dbReference type="InterPro" id="IPR036121">
    <property type="entry name" value="ATPase_F1/V1/A1_a/bsu_N_sf"/>
</dbReference>
<dbReference type="InterPro" id="IPR000194">
    <property type="entry name" value="ATPase_F1/V1/A1_a/bsu_nucl-bd"/>
</dbReference>
<dbReference type="InterPro" id="IPR027417">
    <property type="entry name" value="P-loop_NTPase"/>
</dbReference>
<dbReference type="NCBIfam" id="TIGR00962">
    <property type="entry name" value="atpA"/>
    <property type="match status" value="1"/>
</dbReference>
<dbReference type="NCBIfam" id="NF009884">
    <property type="entry name" value="PRK13343.1"/>
    <property type="match status" value="1"/>
</dbReference>
<dbReference type="PANTHER" id="PTHR48082">
    <property type="entry name" value="ATP SYNTHASE SUBUNIT ALPHA, MITOCHONDRIAL"/>
    <property type="match status" value="1"/>
</dbReference>
<dbReference type="PANTHER" id="PTHR48082:SF2">
    <property type="entry name" value="ATP SYNTHASE SUBUNIT ALPHA, MITOCHONDRIAL"/>
    <property type="match status" value="1"/>
</dbReference>
<dbReference type="Pfam" id="PF00006">
    <property type="entry name" value="ATP-synt_ab"/>
    <property type="match status" value="1"/>
</dbReference>
<dbReference type="Pfam" id="PF00306">
    <property type="entry name" value="ATP-synt_ab_C"/>
    <property type="match status" value="1"/>
</dbReference>
<dbReference type="Pfam" id="PF02874">
    <property type="entry name" value="ATP-synt_ab_N"/>
    <property type="match status" value="1"/>
</dbReference>
<dbReference type="PIRSF" id="PIRSF039088">
    <property type="entry name" value="F_ATPase_subunit_alpha"/>
    <property type="match status" value="1"/>
</dbReference>
<dbReference type="SUPFAM" id="SSF47917">
    <property type="entry name" value="C-terminal domain of alpha and beta subunits of F1 ATP synthase"/>
    <property type="match status" value="1"/>
</dbReference>
<dbReference type="SUPFAM" id="SSF50615">
    <property type="entry name" value="N-terminal domain of alpha and beta subunits of F1 ATP synthase"/>
    <property type="match status" value="1"/>
</dbReference>
<dbReference type="SUPFAM" id="SSF52540">
    <property type="entry name" value="P-loop containing nucleoside triphosphate hydrolases"/>
    <property type="match status" value="1"/>
</dbReference>
<dbReference type="PROSITE" id="PS00152">
    <property type="entry name" value="ATPASE_ALPHA_BETA"/>
    <property type="match status" value="1"/>
</dbReference>
<name>ATPA_LACCB</name>
<protein>
    <recommendedName>
        <fullName evidence="1">ATP synthase subunit alpha</fullName>
        <ecNumber evidence="1">7.1.2.2</ecNumber>
    </recommendedName>
    <alternativeName>
        <fullName evidence="1">ATP synthase F1 sector subunit alpha</fullName>
    </alternativeName>
    <alternativeName>
        <fullName evidence="1">F-ATPase subunit alpha</fullName>
    </alternativeName>
</protein>
<feature type="chain" id="PRO_1000143397" description="ATP synthase subunit alpha">
    <location>
        <begin position="1"/>
        <end position="509"/>
    </location>
</feature>
<feature type="binding site" evidence="1">
    <location>
        <begin position="169"/>
        <end position="176"/>
    </location>
    <ligand>
        <name>ATP</name>
        <dbReference type="ChEBI" id="CHEBI:30616"/>
    </ligand>
</feature>
<feature type="site" description="Required for activity" evidence="1">
    <location>
        <position position="362"/>
    </location>
</feature>
<evidence type="ECO:0000255" key="1">
    <source>
        <dbReference type="HAMAP-Rule" id="MF_01346"/>
    </source>
</evidence>
<organism>
    <name type="scientific">Lacticaseibacillus casei (strain BL23)</name>
    <name type="common">Lactobacillus casei</name>
    <dbReference type="NCBI Taxonomy" id="543734"/>
    <lineage>
        <taxon>Bacteria</taxon>
        <taxon>Bacillati</taxon>
        <taxon>Bacillota</taxon>
        <taxon>Bacilli</taxon>
        <taxon>Lactobacillales</taxon>
        <taxon>Lactobacillaceae</taxon>
        <taxon>Lacticaseibacillus</taxon>
    </lineage>
</organism>
<gene>
    <name evidence="1" type="primary">atpA</name>
    <name type="ordered locus">LCABL_13860</name>
</gene>
<keyword id="KW-0066">ATP synthesis</keyword>
<keyword id="KW-0067">ATP-binding</keyword>
<keyword id="KW-1003">Cell membrane</keyword>
<keyword id="KW-0139">CF(1)</keyword>
<keyword id="KW-0375">Hydrogen ion transport</keyword>
<keyword id="KW-0406">Ion transport</keyword>
<keyword id="KW-0472">Membrane</keyword>
<keyword id="KW-0547">Nucleotide-binding</keyword>
<keyword id="KW-1278">Translocase</keyword>
<keyword id="KW-0813">Transport</keyword>
<comment type="function">
    <text evidence="1">Produces ATP from ADP in the presence of a proton gradient across the membrane. The alpha chain is a regulatory subunit.</text>
</comment>
<comment type="catalytic activity">
    <reaction evidence="1">
        <text>ATP + H2O + 4 H(+)(in) = ADP + phosphate + 5 H(+)(out)</text>
        <dbReference type="Rhea" id="RHEA:57720"/>
        <dbReference type="ChEBI" id="CHEBI:15377"/>
        <dbReference type="ChEBI" id="CHEBI:15378"/>
        <dbReference type="ChEBI" id="CHEBI:30616"/>
        <dbReference type="ChEBI" id="CHEBI:43474"/>
        <dbReference type="ChEBI" id="CHEBI:456216"/>
        <dbReference type="EC" id="7.1.2.2"/>
    </reaction>
</comment>
<comment type="subunit">
    <text evidence="1">F-type ATPases have 2 components, CF(1) - the catalytic core - and CF(0) - the membrane proton channel. CF(1) has five subunits: alpha(3), beta(3), gamma(1), delta(1), epsilon(1). CF(0) has three main subunits: a(1), b(2) and c(9-12). The alpha and beta chains form an alternating ring which encloses part of the gamma chain. CF(1) is attached to CF(0) by a central stalk formed by the gamma and epsilon chains, while a peripheral stalk is formed by the delta and b chains.</text>
</comment>
<comment type="subcellular location">
    <subcellularLocation>
        <location evidence="1">Cell membrane</location>
        <topology evidence="1">Peripheral membrane protein</topology>
    </subcellularLocation>
</comment>
<comment type="similarity">
    <text evidence="1">Belongs to the ATPase alpha/beta chains family.</text>
</comment>